<keyword id="KW-0067">ATP-binding</keyword>
<keyword id="KW-0963">Cytoplasm</keyword>
<keyword id="KW-0418">Kinase</keyword>
<keyword id="KW-0460">Magnesium</keyword>
<keyword id="KW-0479">Metal-binding</keyword>
<keyword id="KW-0547">Nucleotide-binding</keyword>
<keyword id="KW-1185">Reference proteome</keyword>
<keyword id="KW-0808">Transferase</keyword>
<organism>
    <name type="scientific">Mycoplasma pneumoniae (strain ATCC 29342 / M129 / Subtype 1)</name>
    <name type="common">Mycoplasmoides pneumoniae</name>
    <dbReference type="NCBI Taxonomy" id="272634"/>
    <lineage>
        <taxon>Bacteria</taxon>
        <taxon>Bacillati</taxon>
        <taxon>Mycoplasmatota</taxon>
        <taxon>Mycoplasmoidales</taxon>
        <taxon>Mycoplasmoidaceae</taxon>
        <taxon>Mycoplasmoides</taxon>
    </lineage>
</organism>
<reference key="1">
    <citation type="journal article" date="1996" name="Nucleic Acids Res.">
        <title>Complete sequence analysis of the genome of the bacterium Mycoplasma pneumoniae.</title>
        <authorList>
            <person name="Himmelreich R."/>
            <person name="Hilbert H."/>
            <person name="Plagens H."/>
            <person name="Pirkl E."/>
            <person name="Li B.-C."/>
            <person name="Herrmann R."/>
        </authorList>
    </citation>
    <scope>NUCLEOTIDE SEQUENCE [LARGE SCALE GENOMIC DNA]</scope>
    <source>
        <strain>ATCC 29342 / M129 / Subtype 1</strain>
    </source>
</reference>
<sequence>MNDNKILVVNAGSSSIKFQLFDYHKKVLAKALCERIFVDGFFKLEFNEQKVEEKVAFPDHHAAVTHFLNTLKKHKIIQELSDIILVGHRVVQGANYFKDSVIVDAEALAKIKEFIKLAPLHNKPEADVIEIFFKEVPSAKNVAVFDTTFHTTIPQENYLYAVPRSWEQKHLVRRYGFHGTSYKFINNYLEKHLNKQNLNLIVCHLGNGASVCAIKNGKSFNTSMGFTPLEGLIMGTRSGDLDPAIIGYVAEQENMSASDVVNALNKKSGMLALTGASDMRDVFAKPQENAVAIKMYVNRVADYIAKYLNQLEGNIDGLVFTGGIGENASDCVELFINAVKSLGFATDLKLFVKYGDSCVVSTPQSKYKIYRVRTNEELMIVEDSIRLTQK</sequence>
<protein>
    <recommendedName>
        <fullName evidence="1">Acetate kinase</fullName>
        <ecNumber evidence="1">2.7.2.1</ecNumber>
    </recommendedName>
    <alternativeName>
        <fullName evidence="1">Acetokinase</fullName>
    </alternativeName>
</protein>
<feature type="chain" id="PRO_0000107588" description="Acetate kinase">
    <location>
        <begin position="1"/>
        <end position="390"/>
    </location>
</feature>
<feature type="active site" description="Proton donor/acceptor" evidence="1">
    <location>
        <position position="146"/>
    </location>
</feature>
<feature type="binding site" evidence="1">
    <location>
        <position position="10"/>
    </location>
    <ligand>
        <name>Mg(2+)</name>
        <dbReference type="ChEBI" id="CHEBI:18420"/>
    </ligand>
</feature>
<feature type="binding site" evidence="1">
    <location>
        <position position="17"/>
    </location>
    <ligand>
        <name>ATP</name>
        <dbReference type="ChEBI" id="CHEBI:30616"/>
    </ligand>
</feature>
<feature type="binding site" evidence="1">
    <location>
        <position position="89"/>
    </location>
    <ligand>
        <name>substrate</name>
    </ligand>
</feature>
<feature type="binding site" evidence="1">
    <location>
        <begin position="204"/>
        <end position="208"/>
    </location>
    <ligand>
        <name>ATP</name>
        <dbReference type="ChEBI" id="CHEBI:30616"/>
    </ligand>
</feature>
<feature type="binding site" evidence="1">
    <location>
        <begin position="278"/>
        <end position="280"/>
    </location>
    <ligand>
        <name>ATP</name>
        <dbReference type="ChEBI" id="CHEBI:30616"/>
    </ligand>
</feature>
<feature type="binding site" evidence="1">
    <location>
        <begin position="323"/>
        <end position="327"/>
    </location>
    <ligand>
        <name>ATP</name>
        <dbReference type="ChEBI" id="CHEBI:30616"/>
    </ligand>
</feature>
<feature type="binding site" evidence="1">
    <location>
        <position position="376"/>
    </location>
    <ligand>
        <name>Mg(2+)</name>
        <dbReference type="ChEBI" id="CHEBI:18420"/>
    </ligand>
</feature>
<feature type="site" description="Transition state stabilizer" evidence="1">
    <location>
        <position position="178"/>
    </location>
</feature>
<feature type="site" description="Transition state stabilizer" evidence="1">
    <location>
        <position position="237"/>
    </location>
</feature>
<accession>P75245</accession>
<comment type="function">
    <text evidence="1">Catalyzes the formation of acetyl phosphate from acetate and ATP. Can also catalyze the reverse reaction.</text>
</comment>
<comment type="catalytic activity">
    <reaction evidence="1">
        <text>acetate + ATP = acetyl phosphate + ADP</text>
        <dbReference type="Rhea" id="RHEA:11352"/>
        <dbReference type="ChEBI" id="CHEBI:22191"/>
        <dbReference type="ChEBI" id="CHEBI:30089"/>
        <dbReference type="ChEBI" id="CHEBI:30616"/>
        <dbReference type="ChEBI" id="CHEBI:456216"/>
        <dbReference type="EC" id="2.7.2.1"/>
    </reaction>
</comment>
<comment type="cofactor">
    <cofactor evidence="1">
        <name>Mg(2+)</name>
        <dbReference type="ChEBI" id="CHEBI:18420"/>
    </cofactor>
    <cofactor evidence="1">
        <name>Mn(2+)</name>
        <dbReference type="ChEBI" id="CHEBI:29035"/>
    </cofactor>
    <text evidence="1">Mg(2+). Can also accept Mn(2+).</text>
</comment>
<comment type="pathway">
    <text evidence="1">Metabolic intermediate biosynthesis; acetyl-CoA biosynthesis; acetyl-CoA from acetate: step 1/2.</text>
</comment>
<comment type="subunit">
    <text evidence="1">Homodimer.</text>
</comment>
<comment type="subcellular location">
    <subcellularLocation>
        <location evidence="1">Cytoplasm</location>
    </subcellularLocation>
</comment>
<comment type="similarity">
    <text evidence="1">Belongs to the acetokinase family.</text>
</comment>
<evidence type="ECO:0000255" key="1">
    <source>
        <dbReference type="HAMAP-Rule" id="MF_00020"/>
    </source>
</evidence>
<gene>
    <name evidence="1" type="primary">ackA</name>
    <name type="ordered locus">MPN_533</name>
    <name type="ORF">MP309</name>
</gene>
<name>ACKA_MYCPN</name>
<proteinExistence type="inferred from homology"/>
<dbReference type="EC" id="2.7.2.1" evidence="1"/>
<dbReference type="EMBL" id="U00089">
    <property type="protein sequence ID" value="AAB95957.1"/>
    <property type="molecule type" value="Genomic_DNA"/>
</dbReference>
<dbReference type="PIR" id="S73635">
    <property type="entry name" value="S73635"/>
</dbReference>
<dbReference type="RefSeq" id="NP_110222.1">
    <property type="nucleotide sequence ID" value="NC_000912.1"/>
</dbReference>
<dbReference type="RefSeq" id="WP_010874890.1">
    <property type="nucleotide sequence ID" value="NZ_OU342337.1"/>
</dbReference>
<dbReference type="SMR" id="P75245"/>
<dbReference type="IntAct" id="P75245">
    <property type="interactions" value="1"/>
</dbReference>
<dbReference type="STRING" id="272634.MPN_533"/>
<dbReference type="EnsemblBacteria" id="AAB95957">
    <property type="protein sequence ID" value="AAB95957"/>
    <property type="gene ID" value="MPN_533"/>
</dbReference>
<dbReference type="KEGG" id="mpn:MPN_533"/>
<dbReference type="PATRIC" id="fig|272634.6.peg.594"/>
<dbReference type="HOGENOM" id="CLU_020352_0_1_14"/>
<dbReference type="OrthoDB" id="9802453at2"/>
<dbReference type="BioCyc" id="MetaCyc:MONOMER-603"/>
<dbReference type="BioCyc" id="MPNE272634:G1GJ3-879-MONOMER"/>
<dbReference type="BRENDA" id="2.7.2.1">
    <property type="organism ID" value="3534"/>
</dbReference>
<dbReference type="UniPathway" id="UPA00340">
    <property type="reaction ID" value="UER00458"/>
</dbReference>
<dbReference type="Proteomes" id="UP000000808">
    <property type="component" value="Chromosome"/>
</dbReference>
<dbReference type="GO" id="GO:0005829">
    <property type="term" value="C:cytosol"/>
    <property type="evidence" value="ECO:0000314"/>
    <property type="project" value="AgBase"/>
</dbReference>
<dbReference type="GO" id="GO:0008776">
    <property type="term" value="F:acetate kinase activity"/>
    <property type="evidence" value="ECO:0007669"/>
    <property type="project" value="UniProtKB-UniRule"/>
</dbReference>
<dbReference type="GO" id="GO:0005524">
    <property type="term" value="F:ATP binding"/>
    <property type="evidence" value="ECO:0007669"/>
    <property type="project" value="UniProtKB-KW"/>
</dbReference>
<dbReference type="GO" id="GO:0000287">
    <property type="term" value="F:magnesium ion binding"/>
    <property type="evidence" value="ECO:0007669"/>
    <property type="project" value="UniProtKB-UniRule"/>
</dbReference>
<dbReference type="GO" id="GO:0006083">
    <property type="term" value="P:acetate metabolic process"/>
    <property type="evidence" value="ECO:0007669"/>
    <property type="project" value="TreeGrafter"/>
</dbReference>
<dbReference type="GO" id="GO:0006085">
    <property type="term" value="P:acetyl-CoA biosynthetic process"/>
    <property type="evidence" value="ECO:0007669"/>
    <property type="project" value="UniProtKB-UniRule"/>
</dbReference>
<dbReference type="Gene3D" id="3.30.420.40">
    <property type="match status" value="2"/>
</dbReference>
<dbReference type="HAMAP" id="MF_00020">
    <property type="entry name" value="Acetate_kinase"/>
    <property type="match status" value="1"/>
</dbReference>
<dbReference type="InterPro" id="IPR004372">
    <property type="entry name" value="Ac/propionate_kinase"/>
</dbReference>
<dbReference type="InterPro" id="IPR000890">
    <property type="entry name" value="Aliphatic_acid_kin_short-chain"/>
</dbReference>
<dbReference type="InterPro" id="IPR023865">
    <property type="entry name" value="Aliphatic_acid_kinase_CS"/>
</dbReference>
<dbReference type="InterPro" id="IPR043129">
    <property type="entry name" value="ATPase_NBD"/>
</dbReference>
<dbReference type="NCBIfam" id="TIGR00016">
    <property type="entry name" value="ackA"/>
    <property type="match status" value="1"/>
</dbReference>
<dbReference type="PANTHER" id="PTHR21060">
    <property type="entry name" value="ACETATE KINASE"/>
    <property type="match status" value="1"/>
</dbReference>
<dbReference type="PANTHER" id="PTHR21060:SF15">
    <property type="entry name" value="ACETATE KINASE-RELATED"/>
    <property type="match status" value="1"/>
</dbReference>
<dbReference type="Pfam" id="PF00871">
    <property type="entry name" value="Acetate_kinase"/>
    <property type="match status" value="1"/>
</dbReference>
<dbReference type="PIRSF" id="PIRSF000722">
    <property type="entry name" value="Acetate_prop_kin"/>
    <property type="match status" value="1"/>
</dbReference>
<dbReference type="PRINTS" id="PR00471">
    <property type="entry name" value="ACETATEKNASE"/>
</dbReference>
<dbReference type="SUPFAM" id="SSF53067">
    <property type="entry name" value="Actin-like ATPase domain"/>
    <property type="match status" value="2"/>
</dbReference>
<dbReference type="PROSITE" id="PS01075">
    <property type="entry name" value="ACETATE_KINASE_1"/>
    <property type="match status" value="1"/>
</dbReference>
<dbReference type="PROSITE" id="PS01076">
    <property type="entry name" value="ACETATE_KINASE_2"/>
    <property type="match status" value="1"/>
</dbReference>